<dbReference type="EC" id="2.1.1.-"/>
<dbReference type="EMBL" id="AE005174">
    <property type="protein sequence ID" value="AAG57697.1"/>
    <property type="molecule type" value="Genomic_DNA"/>
</dbReference>
<dbReference type="EMBL" id="BA000007">
    <property type="protein sequence ID" value="BAB36870.1"/>
    <property type="molecule type" value="Genomic_DNA"/>
</dbReference>
<dbReference type="PIR" id="G91059">
    <property type="entry name" value="G91059"/>
</dbReference>
<dbReference type="RefSeq" id="NP_311474.1">
    <property type="nucleotide sequence ID" value="NC_002695.1"/>
</dbReference>
<dbReference type="RefSeq" id="WP_000997403.1">
    <property type="nucleotide sequence ID" value="NZ_VOAI01000001.1"/>
</dbReference>
<dbReference type="SMR" id="P0AGJ6"/>
<dbReference type="IntAct" id="P0AGJ6">
    <property type="interactions" value="1"/>
</dbReference>
<dbReference type="MINT" id="P0AGJ6"/>
<dbReference type="STRING" id="155864.Z3865"/>
<dbReference type="GeneID" id="914879"/>
<dbReference type="KEGG" id="ece:Z3865"/>
<dbReference type="KEGG" id="ecs:ECs_3447"/>
<dbReference type="PATRIC" id="fig|386585.9.peg.3602"/>
<dbReference type="eggNOG" id="COG0566">
    <property type="taxonomic scope" value="Bacteria"/>
</dbReference>
<dbReference type="HOGENOM" id="CLU_021322_2_1_6"/>
<dbReference type="OMA" id="LWATVQM"/>
<dbReference type="Proteomes" id="UP000000558">
    <property type="component" value="Chromosome"/>
</dbReference>
<dbReference type="Proteomes" id="UP000002519">
    <property type="component" value="Chromosome"/>
</dbReference>
<dbReference type="GO" id="GO:0005829">
    <property type="term" value="C:cytosol"/>
    <property type="evidence" value="ECO:0007669"/>
    <property type="project" value="TreeGrafter"/>
</dbReference>
<dbReference type="GO" id="GO:0003723">
    <property type="term" value="F:RNA binding"/>
    <property type="evidence" value="ECO:0007669"/>
    <property type="project" value="InterPro"/>
</dbReference>
<dbReference type="GO" id="GO:0008173">
    <property type="term" value="F:RNA methyltransferase activity"/>
    <property type="evidence" value="ECO:0007669"/>
    <property type="project" value="InterPro"/>
</dbReference>
<dbReference type="GO" id="GO:0032259">
    <property type="term" value="P:methylation"/>
    <property type="evidence" value="ECO:0007669"/>
    <property type="project" value="UniProtKB-KW"/>
</dbReference>
<dbReference type="GO" id="GO:0006396">
    <property type="term" value="P:RNA processing"/>
    <property type="evidence" value="ECO:0007669"/>
    <property type="project" value="InterPro"/>
</dbReference>
<dbReference type="CDD" id="cd18095">
    <property type="entry name" value="SpoU-like_rRNA-MTase"/>
    <property type="match status" value="1"/>
</dbReference>
<dbReference type="FunFam" id="3.40.1280.10:FF:000013">
    <property type="entry name" value="RNA methyltransferase"/>
    <property type="match status" value="1"/>
</dbReference>
<dbReference type="FunFam" id="3.30.1330.30:FF:000010">
    <property type="entry name" value="tRNA/rRNA methyltransferase"/>
    <property type="match status" value="1"/>
</dbReference>
<dbReference type="Gene3D" id="3.30.1330.30">
    <property type="match status" value="1"/>
</dbReference>
<dbReference type="Gene3D" id="3.40.1280.10">
    <property type="match status" value="1"/>
</dbReference>
<dbReference type="InterPro" id="IPR029028">
    <property type="entry name" value="Alpha/beta_knot_MTases"/>
</dbReference>
<dbReference type="InterPro" id="IPR029064">
    <property type="entry name" value="Ribosomal_eL30-like_sf"/>
</dbReference>
<dbReference type="InterPro" id="IPR004441">
    <property type="entry name" value="rRNA_MeTrfase_TrmH"/>
</dbReference>
<dbReference type="InterPro" id="IPR001537">
    <property type="entry name" value="SpoU_MeTrfase"/>
</dbReference>
<dbReference type="InterPro" id="IPR013123">
    <property type="entry name" value="SpoU_subst-bd"/>
</dbReference>
<dbReference type="InterPro" id="IPR029026">
    <property type="entry name" value="tRNA_m1G_MTases_N"/>
</dbReference>
<dbReference type="InterPro" id="IPR016479">
    <property type="entry name" value="YfiF_prd"/>
</dbReference>
<dbReference type="NCBIfam" id="NF008117">
    <property type="entry name" value="PRK10864.1"/>
    <property type="match status" value="1"/>
</dbReference>
<dbReference type="PANTHER" id="PTHR46429">
    <property type="entry name" value="23S RRNA (GUANOSINE-2'-O-)-METHYLTRANSFERASE RLMB"/>
    <property type="match status" value="1"/>
</dbReference>
<dbReference type="PANTHER" id="PTHR46429:SF2">
    <property type="entry name" value="TRNA_RRNA METHYLTRANSFERASE"/>
    <property type="match status" value="1"/>
</dbReference>
<dbReference type="Pfam" id="PF00588">
    <property type="entry name" value="SpoU_methylase"/>
    <property type="match status" value="1"/>
</dbReference>
<dbReference type="Pfam" id="PF08032">
    <property type="entry name" value="SpoU_sub_bind"/>
    <property type="match status" value="1"/>
</dbReference>
<dbReference type="PIRSF" id="PIRSF006280">
    <property type="entry name" value="YfiF_prd"/>
    <property type="match status" value="1"/>
</dbReference>
<dbReference type="SMART" id="SM00967">
    <property type="entry name" value="SpoU_sub_bind"/>
    <property type="match status" value="1"/>
</dbReference>
<dbReference type="SUPFAM" id="SSF75217">
    <property type="entry name" value="alpha/beta knot"/>
    <property type="match status" value="1"/>
</dbReference>
<dbReference type="SUPFAM" id="SSF55315">
    <property type="entry name" value="L30e-like"/>
    <property type="match status" value="1"/>
</dbReference>
<evidence type="ECO:0000256" key="1">
    <source>
        <dbReference type="SAM" id="MobiDB-lite"/>
    </source>
</evidence>
<evidence type="ECO:0000305" key="2"/>
<sequence>MNDEMKGKSGKVKVMYVRSDDDSDKRTHNPRTGKGGGRPGKSRADGGRRPARDDKQSQPRDRKWEDSPWRTVSRAPGDETPEKADHGGISGKSFIDPEVLRRQRAEETRVYGENACQALFQSRPEAIVRAWFIQSVTPRFKEALRWMAANRKAYHVVDEAELTKASGTEHHGGVCFLIKKRNGTTVQQWVSQAGAQDCVLALENESNPHNLGGMMRSCAHFGVKGVVVQDAALLESGAAIRTAEGGAEHVQPITGDNIVNVLDDFRQAGYTVVTTSSEQGKPLFKTSLPAKMVLVLGQEYEGLPDAARDPNDLRVKIDGTGNVAGLNISVATGVLLGEWWRQNKA</sequence>
<accession>P0AGJ6</accession>
<accession>P33635</accession>
<accession>P76999</accession>
<keyword id="KW-0489">Methyltransferase</keyword>
<keyword id="KW-1185">Reference proteome</keyword>
<keyword id="KW-0808">Transferase</keyword>
<organism>
    <name type="scientific">Escherichia coli O157:H7</name>
    <dbReference type="NCBI Taxonomy" id="83334"/>
    <lineage>
        <taxon>Bacteria</taxon>
        <taxon>Pseudomonadati</taxon>
        <taxon>Pseudomonadota</taxon>
        <taxon>Gammaproteobacteria</taxon>
        <taxon>Enterobacterales</taxon>
        <taxon>Enterobacteriaceae</taxon>
        <taxon>Escherichia</taxon>
    </lineage>
</organism>
<feature type="chain" id="PRO_0000159815" description="Uncharacterized tRNA/rRNA methyltransferase YfiF">
    <location>
        <begin position="1"/>
        <end position="345"/>
    </location>
</feature>
<feature type="region of interest" description="Disordered" evidence="1">
    <location>
        <begin position="1"/>
        <end position="98"/>
    </location>
</feature>
<feature type="compositionally biased region" description="Basic and acidic residues" evidence="1">
    <location>
        <begin position="18"/>
        <end position="27"/>
    </location>
</feature>
<feature type="compositionally biased region" description="Basic and acidic residues" evidence="1">
    <location>
        <begin position="42"/>
        <end position="68"/>
    </location>
</feature>
<feature type="compositionally biased region" description="Basic and acidic residues" evidence="1">
    <location>
        <begin position="76"/>
        <end position="86"/>
    </location>
</feature>
<reference key="1">
    <citation type="journal article" date="2001" name="Nature">
        <title>Genome sequence of enterohaemorrhagic Escherichia coli O157:H7.</title>
        <authorList>
            <person name="Perna N.T."/>
            <person name="Plunkett G. III"/>
            <person name="Burland V."/>
            <person name="Mau B."/>
            <person name="Glasner J.D."/>
            <person name="Rose D.J."/>
            <person name="Mayhew G.F."/>
            <person name="Evans P.S."/>
            <person name="Gregor J."/>
            <person name="Kirkpatrick H.A."/>
            <person name="Posfai G."/>
            <person name="Hackett J."/>
            <person name="Klink S."/>
            <person name="Boutin A."/>
            <person name="Shao Y."/>
            <person name="Miller L."/>
            <person name="Grotbeck E.J."/>
            <person name="Davis N.W."/>
            <person name="Lim A."/>
            <person name="Dimalanta E.T."/>
            <person name="Potamousis K."/>
            <person name="Apodaca J."/>
            <person name="Anantharaman T.S."/>
            <person name="Lin J."/>
            <person name="Yen G."/>
            <person name="Schwartz D.C."/>
            <person name="Welch R.A."/>
            <person name="Blattner F.R."/>
        </authorList>
    </citation>
    <scope>NUCLEOTIDE SEQUENCE [LARGE SCALE GENOMIC DNA]</scope>
    <source>
        <strain>O157:H7 / EDL933 / ATCC 700927 / EHEC</strain>
    </source>
</reference>
<reference key="2">
    <citation type="journal article" date="2001" name="DNA Res.">
        <title>Complete genome sequence of enterohemorrhagic Escherichia coli O157:H7 and genomic comparison with a laboratory strain K-12.</title>
        <authorList>
            <person name="Hayashi T."/>
            <person name="Makino K."/>
            <person name="Ohnishi M."/>
            <person name="Kurokawa K."/>
            <person name="Ishii K."/>
            <person name="Yokoyama K."/>
            <person name="Han C.-G."/>
            <person name="Ohtsubo E."/>
            <person name="Nakayama K."/>
            <person name="Murata T."/>
            <person name="Tanaka M."/>
            <person name="Tobe T."/>
            <person name="Iida T."/>
            <person name="Takami H."/>
            <person name="Honda T."/>
            <person name="Sasakawa C."/>
            <person name="Ogasawara N."/>
            <person name="Yasunaga T."/>
            <person name="Kuhara S."/>
            <person name="Shiba T."/>
            <person name="Hattori M."/>
            <person name="Shinagawa H."/>
        </authorList>
    </citation>
    <scope>NUCLEOTIDE SEQUENCE [LARGE SCALE GENOMIC DNA]</scope>
    <source>
        <strain>O157:H7 / Sakai / RIMD 0509952 / EHEC</strain>
    </source>
</reference>
<name>YFIF_ECO57</name>
<comment type="similarity">
    <text evidence="2">Belongs to the class IV-like SAM-binding methyltransferase superfamily. RNA methyltransferase TrmH family.</text>
</comment>
<gene>
    <name type="primary">yfiF</name>
    <name type="ordered locus">Z3865</name>
    <name type="ordered locus">ECs3447</name>
</gene>
<protein>
    <recommendedName>
        <fullName>Uncharacterized tRNA/rRNA methyltransferase YfiF</fullName>
        <ecNumber>2.1.1.-</ecNumber>
    </recommendedName>
</protein>
<proteinExistence type="inferred from homology"/>